<protein>
    <recommendedName>
        <fullName evidence="1">Holliday junction branch migration complex subunit RuvB</fullName>
        <ecNumber evidence="1">3.6.4.-</ecNumber>
    </recommendedName>
</protein>
<keyword id="KW-0067">ATP-binding</keyword>
<keyword id="KW-0963">Cytoplasm</keyword>
<keyword id="KW-0227">DNA damage</keyword>
<keyword id="KW-0233">DNA recombination</keyword>
<keyword id="KW-0234">DNA repair</keyword>
<keyword id="KW-0238">DNA-binding</keyword>
<keyword id="KW-0378">Hydrolase</keyword>
<keyword id="KW-0547">Nucleotide-binding</keyword>
<evidence type="ECO:0000255" key="1">
    <source>
        <dbReference type="HAMAP-Rule" id="MF_00016"/>
    </source>
</evidence>
<evidence type="ECO:0000256" key="2">
    <source>
        <dbReference type="SAM" id="MobiDB-lite"/>
    </source>
</evidence>
<reference key="1">
    <citation type="journal article" date="2005" name="Genome Res.">
        <title>Comparative and functional genomic analyses of the pathogenicity of phytopathogen Xanthomonas campestris pv. campestris.</title>
        <authorList>
            <person name="Qian W."/>
            <person name="Jia Y."/>
            <person name="Ren S.-X."/>
            <person name="He Y.-Q."/>
            <person name="Feng J.-X."/>
            <person name="Lu L.-F."/>
            <person name="Sun Q."/>
            <person name="Ying G."/>
            <person name="Tang D.-J."/>
            <person name="Tang H."/>
            <person name="Wu W."/>
            <person name="Hao P."/>
            <person name="Wang L."/>
            <person name="Jiang B.-L."/>
            <person name="Zeng S."/>
            <person name="Gu W.-Y."/>
            <person name="Lu G."/>
            <person name="Rong L."/>
            <person name="Tian Y."/>
            <person name="Yao Z."/>
            <person name="Fu G."/>
            <person name="Chen B."/>
            <person name="Fang R."/>
            <person name="Qiang B."/>
            <person name="Chen Z."/>
            <person name="Zhao G.-P."/>
            <person name="Tang J.-L."/>
            <person name="He C."/>
        </authorList>
    </citation>
    <scope>NUCLEOTIDE SEQUENCE [LARGE SCALE GENOMIC DNA]</scope>
    <source>
        <strain>8004</strain>
    </source>
</reference>
<organism>
    <name type="scientific">Xanthomonas campestris pv. campestris (strain 8004)</name>
    <dbReference type="NCBI Taxonomy" id="314565"/>
    <lineage>
        <taxon>Bacteria</taxon>
        <taxon>Pseudomonadati</taxon>
        <taxon>Pseudomonadota</taxon>
        <taxon>Gammaproteobacteria</taxon>
        <taxon>Lysobacterales</taxon>
        <taxon>Lysobacteraceae</taxon>
        <taxon>Xanthomonas</taxon>
    </lineage>
</organism>
<name>RUVB_XANC8</name>
<accession>Q4UXL7</accession>
<gene>
    <name evidence="1" type="primary">ruvB</name>
    <name type="ordered locus">XC_1136</name>
</gene>
<comment type="function">
    <text evidence="1">The RuvA-RuvB-RuvC complex processes Holliday junction (HJ) DNA during genetic recombination and DNA repair, while the RuvA-RuvB complex plays an important role in the rescue of blocked DNA replication forks via replication fork reversal (RFR). RuvA specifically binds to HJ cruciform DNA, conferring on it an open structure. The RuvB hexamer acts as an ATP-dependent pump, pulling dsDNA into and through the RuvAB complex. RuvB forms 2 homohexamers on either side of HJ DNA bound by 1 or 2 RuvA tetramers; 4 subunits per hexamer contact DNA at a time. Coordinated motions by a converter formed by DNA-disengaged RuvB subunits stimulates ATP hydrolysis and nucleotide exchange. Immobilization of the converter enables RuvB to convert the ATP-contained energy into a lever motion, pulling 2 nucleotides of DNA out of the RuvA tetramer per ATP hydrolyzed, thus driving DNA branch migration. The RuvB motors rotate together with the DNA substrate, which together with the progressing nucleotide cycle form the mechanistic basis for DNA recombination by continuous HJ branch migration. Branch migration allows RuvC to scan DNA until it finds its consensus sequence, where it cleaves and resolves cruciform DNA.</text>
</comment>
<comment type="catalytic activity">
    <reaction evidence="1">
        <text>ATP + H2O = ADP + phosphate + H(+)</text>
        <dbReference type="Rhea" id="RHEA:13065"/>
        <dbReference type="ChEBI" id="CHEBI:15377"/>
        <dbReference type="ChEBI" id="CHEBI:15378"/>
        <dbReference type="ChEBI" id="CHEBI:30616"/>
        <dbReference type="ChEBI" id="CHEBI:43474"/>
        <dbReference type="ChEBI" id="CHEBI:456216"/>
    </reaction>
</comment>
<comment type="subunit">
    <text evidence="1">Homohexamer. Forms an RuvA(8)-RuvB(12)-Holliday junction (HJ) complex. HJ DNA is sandwiched between 2 RuvA tetramers; dsDNA enters through RuvA and exits via RuvB. An RuvB hexamer assembles on each DNA strand where it exits the tetramer. Each RuvB hexamer is contacted by two RuvA subunits (via domain III) on 2 adjacent RuvB subunits; this complex drives branch migration. In the full resolvosome a probable DNA-RuvA(4)-RuvB(12)-RuvC(2) complex forms which resolves the HJ.</text>
</comment>
<comment type="subcellular location">
    <subcellularLocation>
        <location evidence="1">Cytoplasm</location>
    </subcellularLocation>
</comment>
<comment type="domain">
    <text evidence="1">Has 3 domains, the large (RuvB-L) and small ATPase (RuvB-S) domains and the C-terminal head (RuvB-H) domain. The head domain binds DNA, while the ATPase domains jointly bind ATP, ADP or are empty depending on the state of the subunit in the translocation cycle. During a single DNA translocation step the structure of each domain remains the same, but their relative positions change.</text>
</comment>
<comment type="similarity">
    <text evidence="1">Belongs to the RuvB family.</text>
</comment>
<dbReference type="EC" id="3.6.4.-" evidence="1"/>
<dbReference type="EMBL" id="CP000050">
    <property type="protein sequence ID" value="AAY48206.1"/>
    <property type="molecule type" value="Genomic_DNA"/>
</dbReference>
<dbReference type="RefSeq" id="WP_011269565.1">
    <property type="nucleotide sequence ID" value="NZ_CP155948.1"/>
</dbReference>
<dbReference type="SMR" id="Q4UXL7"/>
<dbReference type="KEGG" id="xcb:XC_1136"/>
<dbReference type="HOGENOM" id="CLU_055599_1_0_6"/>
<dbReference type="Proteomes" id="UP000000420">
    <property type="component" value="Chromosome"/>
</dbReference>
<dbReference type="GO" id="GO:0005737">
    <property type="term" value="C:cytoplasm"/>
    <property type="evidence" value="ECO:0007669"/>
    <property type="project" value="UniProtKB-SubCell"/>
</dbReference>
<dbReference type="GO" id="GO:0048476">
    <property type="term" value="C:Holliday junction resolvase complex"/>
    <property type="evidence" value="ECO:0007669"/>
    <property type="project" value="UniProtKB-UniRule"/>
</dbReference>
<dbReference type="GO" id="GO:0005524">
    <property type="term" value="F:ATP binding"/>
    <property type="evidence" value="ECO:0007669"/>
    <property type="project" value="UniProtKB-UniRule"/>
</dbReference>
<dbReference type="GO" id="GO:0016887">
    <property type="term" value="F:ATP hydrolysis activity"/>
    <property type="evidence" value="ECO:0007669"/>
    <property type="project" value="InterPro"/>
</dbReference>
<dbReference type="GO" id="GO:0000400">
    <property type="term" value="F:four-way junction DNA binding"/>
    <property type="evidence" value="ECO:0007669"/>
    <property type="project" value="UniProtKB-UniRule"/>
</dbReference>
<dbReference type="GO" id="GO:0009378">
    <property type="term" value="F:four-way junction helicase activity"/>
    <property type="evidence" value="ECO:0007669"/>
    <property type="project" value="InterPro"/>
</dbReference>
<dbReference type="GO" id="GO:0006310">
    <property type="term" value="P:DNA recombination"/>
    <property type="evidence" value="ECO:0007669"/>
    <property type="project" value="UniProtKB-UniRule"/>
</dbReference>
<dbReference type="GO" id="GO:0006281">
    <property type="term" value="P:DNA repair"/>
    <property type="evidence" value="ECO:0007669"/>
    <property type="project" value="UniProtKB-UniRule"/>
</dbReference>
<dbReference type="CDD" id="cd00009">
    <property type="entry name" value="AAA"/>
    <property type="match status" value="1"/>
</dbReference>
<dbReference type="FunFam" id="3.40.50.300:FF:000073">
    <property type="entry name" value="Holliday junction ATP-dependent DNA helicase RuvB"/>
    <property type="match status" value="1"/>
</dbReference>
<dbReference type="Gene3D" id="1.10.8.60">
    <property type="match status" value="1"/>
</dbReference>
<dbReference type="Gene3D" id="3.40.50.300">
    <property type="entry name" value="P-loop containing nucleotide triphosphate hydrolases"/>
    <property type="match status" value="1"/>
</dbReference>
<dbReference type="Gene3D" id="1.10.10.10">
    <property type="entry name" value="Winged helix-like DNA-binding domain superfamily/Winged helix DNA-binding domain"/>
    <property type="match status" value="1"/>
</dbReference>
<dbReference type="HAMAP" id="MF_00016">
    <property type="entry name" value="DNA_HJ_migration_RuvB"/>
    <property type="match status" value="1"/>
</dbReference>
<dbReference type="InterPro" id="IPR003593">
    <property type="entry name" value="AAA+_ATPase"/>
</dbReference>
<dbReference type="InterPro" id="IPR041445">
    <property type="entry name" value="AAA_lid_4"/>
</dbReference>
<dbReference type="InterPro" id="IPR004605">
    <property type="entry name" value="DNA_helicase_Holl-junc_RuvB"/>
</dbReference>
<dbReference type="InterPro" id="IPR027417">
    <property type="entry name" value="P-loop_NTPase"/>
</dbReference>
<dbReference type="InterPro" id="IPR008824">
    <property type="entry name" value="RuvB-like_N"/>
</dbReference>
<dbReference type="InterPro" id="IPR008823">
    <property type="entry name" value="RuvB_C"/>
</dbReference>
<dbReference type="InterPro" id="IPR036388">
    <property type="entry name" value="WH-like_DNA-bd_sf"/>
</dbReference>
<dbReference type="InterPro" id="IPR036390">
    <property type="entry name" value="WH_DNA-bd_sf"/>
</dbReference>
<dbReference type="NCBIfam" id="NF000868">
    <property type="entry name" value="PRK00080.1"/>
    <property type="match status" value="1"/>
</dbReference>
<dbReference type="NCBIfam" id="TIGR00635">
    <property type="entry name" value="ruvB"/>
    <property type="match status" value="1"/>
</dbReference>
<dbReference type="PANTHER" id="PTHR42848">
    <property type="match status" value="1"/>
</dbReference>
<dbReference type="PANTHER" id="PTHR42848:SF1">
    <property type="entry name" value="HOLLIDAY JUNCTION BRANCH MIGRATION COMPLEX SUBUNIT RUVB"/>
    <property type="match status" value="1"/>
</dbReference>
<dbReference type="Pfam" id="PF17864">
    <property type="entry name" value="AAA_lid_4"/>
    <property type="match status" value="1"/>
</dbReference>
<dbReference type="Pfam" id="PF05491">
    <property type="entry name" value="RuvB_C"/>
    <property type="match status" value="1"/>
</dbReference>
<dbReference type="Pfam" id="PF05496">
    <property type="entry name" value="RuvB_N"/>
    <property type="match status" value="1"/>
</dbReference>
<dbReference type="SMART" id="SM00382">
    <property type="entry name" value="AAA"/>
    <property type="match status" value="1"/>
</dbReference>
<dbReference type="SUPFAM" id="SSF52540">
    <property type="entry name" value="P-loop containing nucleoside triphosphate hydrolases"/>
    <property type="match status" value="1"/>
</dbReference>
<dbReference type="SUPFAM" id="SSF46785">
    <property type="entry name" value="Winged helix' DNA-binding domain"/>
    <property type="match status" value="1"/>
</dbReference>
<feature type="chain" id="PRO_0000235429" description="Holliday junction branch migration complex subunit RuvB">
    <location>
        <begin position="1"/>
        <end position="346"/>
    </location>
</feature>
<feature type="region of interest" description="Large ATPase domain (RuvB-L)" evidence="1">
    <location>
        <begin position="1"/>
        <end position="183"/>
    </location>
</feature>
<feature type="region of interest" description="Disordered" evidence="2">
    <location>
        <begin position="1"/>
        <end position="20"/>
    </location>
</feature>
<feature type="region of interest" description="Small ATPAse domain (RuvB-S)" evidence="1">
    <location>
        <begin position="184"/>
        <end position="254"/>
    </location>
</feature>
<feature type="region of interest" description="Head domain (RuvB-H)" evidence="1">
    <location>
        <begin position="257"/>
        <end position="346"/>
    </location>
</feature>
<feature type="compositionally biased region" description="Polar residues" evidence="2">
    <location>
        <begin position="1"/>
        <end position="11"/>
    </location>
</feature>
<feature type="binding site" evidence="1">
    <location>
        <position position="22"/>
    </location>
    <ligand>
        <name>ATP</name>
        <dbReference type="ChEBI" id="CHEBI:30616"/>
    </ligand>
</feature>
<feature type="binding site" evidence="1">
    <location>
        <position position="23"/>
    </location>
    <ligand>
        <name>ATP</name>
        <dbReference type="ChEBI" id="CHEBI:30616"/>
    </ligand>
</feature>
<feature type="binding site" evidence="1">
    <location>
        <position position="64"/>
    </location>
    <ligand>
        <name>ATP</name>
        <dbReference type="ChEBI" id="CHEBI:30616"/>
    </ligand>
</feature>
<feature type="binding site" evidence="1">
    <location>
        <position position="67"/>
    </location>
    <ligand>
        <name>ATP</name>
        <dbReference type="ChEBI" id="CHEBI:30616"/>
    </ligand>
</feature>
<feature type="binding site" evidence="1">
    <location>
        <position position="68"/>
    </location>
    <ligand>
        <name>ATP</name>
        <dbReference type="ChEBI" id="CHEBI:30616"/>
    </ligand>
</feature>
<feature type="binding site" evidence="1">
    <location>
        <position position="68"/>
    </location>
    <ligand>
        <name>Mg(2+)</name>
        <dbReference type="ChEBI" id="CHEBI:18420"/>
    </ligand>
</feature>
<feature type="binding site" evidence="1">
    <location>
        <position position="69"/>
    </location>
    <ligand>
        <name>ATP</name>
        <dbReference type="ChEBI" id="CHEBI:30616"/>
    </ligand>
</feature>
<feature type="binding site" evidence="1">
    <location>
        <begin position="130"/>
        <end position="132"/>
    </location>
    <ligand>
        <name>ATP</name>
        <dbReference type="ChEBI" id="CHEBI:30616"/>
    </ligand>
</feature>
<feature type="binding site" evidence="1">
    <location>
        <position position="173"/>
    </location>
    <ligand>
        <name>ATP</name>
        <dbReference type="ChEBI" id="CHEBI:30616"/>
    </ligand>
</feature>
<feature type="binding site" evidence="1">
    <location>
        <position position="183"/>
    </location>
    <ligand>
        <name>ATP</name>
        <dbReference type="ChEBI" id="CHEBI:30616"/>
    </ligand>
</feature>
<feature type="binding site" evidence="1">
    <location>
        <position position="220"/>
    </location>
    <ligand>
        <name>ATP</name>
        <dbReference type="ChEBI" id="CHEBI:30616"/>
    </ligand>
</feature>
<feature type="binding site" evidence="1">
    <location>
        <position position="293"/>
    </location>
    <ligand>
        <name>DNA</name>
        <dbReference type="ChEBI" id="CHEBI:16991"/>
    </ligand>
</feature>
<feature type="binding site" evidence="1">
    <location>
        <position position="312"/>
    </location>
    <ligand>
        <name>DNA</name>
        <dbReference type="ChEBI" id="CHEBI:16991"/>
    </ligand>
</feature>
<feature type="binding site" evidence="1">
    <location>
        <position position="317"/>
    </location>
    <ligand>
        <name>DNA</name>
        <dbReference type="ChEBI" id="CHEBI:16991"/>
    </ligand>
</feature>
<sequence>MTEQRTIASSATREDEAADASIRPKRLADYLGQQPVRDQMEIYIQAAKARGEAMDHVLIFGPPGLGKTTLSHVIANELGVNLRVTSGPVIEKAGDLAALLTNLQPHDVLFIDEIHRLSPVVEEVLYPAMEDFQIDIMIGDGPAARSIKIDLPPFTLIGATTRAGLLTAPLRDRFGIVQRLEFYSPQELTRIVIRSAAILGIDCTPDGAAEIARRARGTPRIANRLLRRVRDFAQVKAAGHIDLAVAQAAMQMLKVDPEGFDELDRRMLRTIVDHFDGGPVGVESLAASLSEERGTLEDVIEPYLIQQGFLIRTARGRMVTPKAYLHLGLKPPRDRAPAIGEPGDLF</sequence>
<proteinExistence type="inferred from homology"/>